<comment type="function">
    <text evidence="1">This protein is involved in the repair of mismatches in DNA. It is possible that it carries out the mismatch recognition step. This protein has a weak ATPase activity.</text>
</comment>
<comment type="similarity">
    <text evidence="1">Belongs to the DNA mismatch repair MutS family.</text>
</comment>
<keyword id="KW-0067">ATP-binding</keyword>
<keyword id="KW-0227">DNA damage</keyword>
<keyword id="KW-0234">DNA repair</keyword>
<keyword id="KW-0238">DNA-binding</keyword>
<keyword id="KW-0547">Nucleotide-binding</keyword>
<keyword id="KW-1185">Reference proteome</keyword>
<protein>
    <recommendedName>
        <fullName evidence="1">DNA mismatch repair protein MutS</fullName>
    </recommendedName>
</protein>
<gene>
    <name evidence="1" type="primary">mutS</name>
    <name type="synonym">mutS2</name>
    <name type="ordered locus">TTE1357</name>
</gene>
<dbReference type="EMBL" id="AE008691">
    <property type="protein sequence ID" value="AAM24579.1"/>
    <property type="molecule type" value="Genomic_DNA"/>
</dbReference>
<dbReference type="SMR" id="Q8RA71"/>
<dbReference type="STRING" id="273068.TTE1357"/>
<dbReference type="KEGG" id="tte:TTE1357"/>
<dbReference type="eggNOG" id="COG0249">
    <property type="taxonomic scope" value="Bacteria"/>
</dbReference>
<dbReference type="HOGENOM" id="CLU_002472_4_0_9"/>
<dbReference type="Proteomes" id="UP000000555">
    <property type="component" value="Chromosome"/>
</dbReference>
<dbReference type="GO" id="GO:0005829">
    <property type="term" value="C:cytosol"/>
    <property type="evidence" value="ECO:0007669"/>
    <property type="project" value="TreeGrafter"/>
</dbReference>
<dbReference type="GO" id="GO:0005524">
    <property type="term" value="F:ATP binding"/>
    <property type="evidence" value="ECO:0007669"/>
    <property type="project" value="UniProtKB-UniRule"/>
</dbReference>
<dbReference type="GO" id="GO:0140664">
    <property type="term" value="F:ATP-dependent DNA damage sensor activity"/>
    <property type="evidence" value="ECO:0007669"/>
    <property type="project" value="InterPro"/>
</dbReference>
<dbReference type="GO" id="GO:0003684">
    <property type="term" value="F:damaged DNA binding"/>
    <property type="evidence" value="ECO:0007669"/>
    <property type="project" value="UniProtKB-UniRule"/>
</dbReference>
<dbReference type="GO" id="GO:0030983">
    <property type="term" value="F:mismatched DNA binding"/>
    <property type="evidence" value="ECO:0007669"/>
    <property type="project" value="InterPro"/>
</dbReference>
<dbReference type="GO" id="GO:0006298">
    <property type="term" value="P:mismatch repair"/>
    <property type="evidence" value="ECO:0007669"/>
    <property type="project" value="UniProtKB-UniRule"/>
</dbReference>
<dbReference type="CDD" id="cd03284">
    <property type="entry name" value="ABC_MutS1"/>
    <property type="match status" value="1"/>
</dbReference>
<dbReference type="FunFam" id="1.10.1420.10:FF:000007">
    <property type="entry name" value="DNA mismatch repair protein MutS"/>
    <property type="match status" value="1"/>
</dbReference>
<dbReference type="FunFam" id="3.40.1170.10:FF:000001">
    <property type="entry name" value="DNA mismatch repair protein MutS"/>
    <property type="match status" value="1"/>
</dbReference>
<dbReference type="FunFam" id="3.40.50.300:FF:000870">
    <property type="entry name" value="MutS protein homolog 4"/>
    <property type="match status" value="1"/>
</dbReference>
<dbReference type="Gene3D" id="1.10.1420.10">
    <property type="match status" value="2"/>
</dbReference>
<dbReference type="Gene3D" id="6.10.140.430">
    <property type="match status" value="1"/>
</dbReference>
<dbReference type="Gene3D" id="3.40.1170.10">
    <property type="entry name" value="DNA repair protein MutS, domain I"/>
    <property type="match status" value="1"/>
</dbReference>
<dbReference type="Gene3D" id="3.30.420.110">
    <property type="entry name" value="MutS, connector domain"/>
    <property type="match status" value="1"/>
</dbReference>
<dbReference type="Gene3D" id="3.40.50.300">
    <property type="entry name" value="P-loop containing nucleotide triphosphate hydrolases"/>
    <property type="match status" value="1"/>
</dbReference>
<dbReference type="HAMAP" id="MF_00096">
    <property type="entry name" value="MutS"/>
    <property type="match status" value="1"/>
</dbReference>
<dbReference type="InterPro" id="IPR005748">
    <property type="entry name" value="DNA_mismatch_repair_MutS"/>
</dbReference>
<dbReference type="InterPro" id="IPR007695">
    <property type="entry name" value="DNA_mismatch_repair_MutS-lik_N"/>
</dbReference>
<dbReference type="InterPro" id="IPR017261">
    <property type="entry name" value="DNA_mismatch_repair_MutS/MSH"/>
</dbReference>
<dbReference type="InterPro" id="IPR000432">
    <property type="entry name" value="DNA_mismatch_repair_MutS_C"/>
</dbReference>
<dbReference type="InterPro" id="IPR007861">
    <property type="entry name" value="DNA_mismatch_repair_MutS_clamp"/>
</dbReference>
<dbReference type="InterPro" id="IPR007696">
    <property type="entry name" value="DNA_mismatch_repair_MutS_core"/>
</dbReference>
<dbReference type="InterPro" id="IPR016151">
    <property type="entry name" value="DNA_mismatch_repair_MutS_N"/>
</dbReference>
<dbReference type="InterPro" id="IPR036187">
    <property type="entry name" value="DNA_mismatch_repair_MutS_sf"/>
</dbReference>
<dbReference type="InterPro" id="IPR007860">
    <property type="entry name" value="DNA_mmatch_repair_MutS_con_dom"/>
</dbReference>
<dbReference type="InterPro" id="IPR045076">
    <property type="entry name" value="MutS"/>
</dbReference>
<dbReference type="InterPro" id="IPR036678">
    <property type="entry name" value="MutS_con_dom_sf"/>
</dbReference>
<dbReference type="InterPro" id="IPR027417">
    <property type="entry name" value="P-loop_NTPase"/>
</dbReference>
<dbReference type="NCBIfam" id="TIGR01070">
    <property type="entry name" value="mutS1"/>
    <property type="match status" value="1"/>
</dbReference>
<dbReference type="NCBIfam" id="NF003810">
    <property type="entry name" value="PRK05399.1"/>
    <property type="match status" value="1"/>
</dbReference>
<dbReference type="PANTHER" id="PTHR11361:SF34">
    <property type="entry name" value="DNA MISMATCH REPAIR PROTEIN MSH1, MITOCHONDRIAL"/>
    <property type="match status" value="1"/>
</dbReference>
<dbReference type="PANTHER" id="PTHR11361">
    <property type="entry name" value="DNA MISMATCH REPAIR PROTEIN MUTS FAMILY MEMBER"/>
    <property type="match status" value="1"/>
</dbReference>
<dbReference type="Pfam" id="PF01624">
    <property type="entry name" value="MutS_I"/>
    <property type="match status" value="1"/>
</dbReference>
<dbReference type="Pfam" id="PF05188">
    <property type="entry name" value="MutS_II"/>
    <property type="match status" value="1"/>
</dbReference>
<dbReference type="Pfam" id="PF05192">
    <property type="entry name" value="MutS_III"/>
    <property type="match status" value="1"/>
</dbReference>
<dbReference type="Pfam" id="PF05190">
    <property type="entry name" value="MutS_IV"/>
    <property type="match status" value="1"/>
</dbReference>
<dbReference type="Pfam" id="PF00488">
    <property type="entry name" value="MutS_V"/>
    <property type="match status" value="1"/>
</dbReference>
<dbReference type="PIRSF" id="PIRSF037677">
    <property type="entry name" value="DNA_mis_repair_Msh6"/>
    <property type="match status" value="1"/>
</dbReference>
<dbReference type="SMART" id="SM00534">
    <property type="entry name" value="MUTSac"/>
    <property type="match status" value="1"/>
</dbReference>
<dbReference type="SMART" id="SM00533">
    <property type="entry name" value="MUTSd"/>
    <property type="match status" value="1"/>
</dbReference>
<dbReference type="SUPFAM" id="SSF55271">
    <property type="entry name" value="DNA repair protein MutS, domain I"/>
    <property type="match status" value="1"/>
</dbReference>
<dbReference type="SUPFAM" id="SSF53150">
    <property type="entry name" value="DNA repair protein MutS, domain II"/>
    <property type="match status" value="1"/>
</dbReference>
<dbReference type="SUPFAM" id="SSF48334">
    <property type="entry name" value="DNA repair protein MutS, domain III"/>
    <property type="match status" value="1"/>
</dbReference>
<dbReference type="SUPFAM" id="SSF52540">
    <property type="entry name" value="P-loop containing nucleoside triphosphate hydrolases"/>
    <property type="match status" value="1"/>
</dbReference>
<dbReference type="PROSITE" id="PS00486">
    <property type="entry name" value="DNA_MISMATCH_REPAIR_2"/>
    <property type="match status" value="1"/>
</dbReference>
<name>MUTS_CALS4</name>
<accession>Q8RA71</accession>
<proteinExistence type="inferred from homology"/>
<evidence type="ECO:0000255" key="1">
    <source>
        <dbReference type="HAMAP-Rule" id="MF_00096"/>
    </source>
</evidence>
<organism>
    <name type="scientific">Caldanaerobacter subterraneus subsp. tengcongensis (strain DSM 15242 / JCM 11007 / NBRC 100824 / MB4)</name>
    <name type="common">Thermoanaerobacter tengcongensis</name>
    <dbReference type="NCBI Taxonomy" id="273068"/>
    <lineage>
        <taxon>Bacteria</taxon>
        <taxon>Bacillati</taxon>
        <taxon>Bacillota</taxon>
        <taxon>Clostridia</taxon>
        <taxon>Thermoanaerobacterales</taxon>
        <taxon>Thermoanaerobacteraceae</taxon>
        <taxon>Caldanaerobacter</taxon>
    </lineage>
</organism>
<reference key="1">
    <citation type="journal article" date="2002" name="Genome Res.">
        <title>A complete sequence of the T. tengcongensis genome.</title>
        <authorList>
            <person name="Bao Q."/>
            <person name="Tian Y."/>
            <person name="Li W."/>
            <person name="Xu Z."/>
            <person name="Xuan Z."/>
            <person name="Hu S."/>
            <person name="Dong W."/>
            <person name="Yang J."/>
            <person name="Chen Y."/>
            <person name="Xue Y."/>
            <person name="Xu Y."/>
            <person name="Lai X."/>
            <person name="Huang L."/>
            <person name="Dong X."/>
            <person name="Ma Y."/>
            <person name="Ling L."/>
            <person name="Tan H."/>
            <person name="Chen R."/>
            <person name="Wang J."/>
            <person name="Yu J."/>
            <person name="Yang H."/>
        </authorList>
    </citation>
    <scope>NUCLEOTIDE SEQUENCE [LARGE SCALE GENOMIC DNA]</scope>
    <source>
        <strain>DSM 15242 / JCM 11007 / NBRC 100824 / MB4</strain>
    </source>
</reference>
<feature type="chain" id="PRO_0000115161" description="DNA mismatch repair protein MutS">
    <location>
        <begin position="1"/>
        <end position="869"/>
    </location>
</feature>
<feature type="binding site" evidence="1">
    <location>
        <begin position="619"/>
        <end position="626"/>
    </location>
    <ligand>
        <name>ATP</name>
        <dbReference type="ChEBI" id="CHEBI:30616"/>
    </ligand>
</feature>
<sequence>MLKMSVTPMMEQYLKIKEKYKDAILFFRLGDFYEMFYEDAEIAAKELEIALTGRDAGTEERAPMAGVPYHAADFYIDKLVKKGYKVAICEQLEDPSKAKGLVKRDVVRIYTPGTIINPESMDEKSNNYLVSVYREKDNYGICAVDVTTGELYATEIKNCKNGKRIYDEIAKYSPSEIISNEEFLKNNKYIKVFKNNNCAVNAYKPLNYEASSELIEKQFDKKVEELELEDKKFVIHSLGALLSYLKELQKTSLKHINKLTLYQDNSYMGLDSNAIRNLEILESNRNKSKKGSLLGVLDRTVTPMGGRLLKKWLEEPLIDKDEIEKRLDAVEELFNNYRERIELKELLNKVYDLERLASKIVYQSVTPKDFISIKLSLQNLPKIKNILSKFSSRLLKEIYEKLDVLQDVYELIDKSIKDDPSNQLKEGNIIKDGYNEMVDKLRKASTEGKNWIANLEADEREKTGIKNLRIGYNKVFGYYIEVTKSNIPQVPDRYIRKQTLANAERYVTPELKEIEETILGAEEKLIELEYELFNEIREKVELQIVRIQNTAKYIAIIDVLISFAEVAETNKYVKPIVDYEDRIVIKEGRHPVVETISDEGFVANDIDIGPENPIMIITGPNMAGKSTYMRQVALIVLMAQVGCFVPASYARIGIVDKIFTRVGASDDIFAGQSTFMVEMSEVANILHSATSKSLIILDEVGRGTSTYDGMSIAQAVIEYIHEKIKAKTLFATHYHELTKLEGKLRGVRNFNVSVEEREDDIIFLHKIVPGGSDRSYGIQVSKLAGLPYSIIERAKEILEALERDKAVKNELEEAVSQFAFTQIDIFSSAKDALIEEIANCDPDNMTPLQALTYLYKLKEKAASLRSGVI</sequence>